<reference key="1">
    <citation type="journal article" date="1996" name="Nucleic Acids Res.">
        <title>Complete sequence analysis of the genome of the bacterium Mycoplasma pneumoniae.</title>
        <authorList>
            <person name="Himmelreich R."/>
            <person name="Hilbert H."/>
            <person name="Plagens H."/>
            <person name="Pirkl E."/>
            <person name="Li B.-C."/>
            <person name="Herrmann R."/>
        </authorList>
    </citation>
    <scope>NUCLEOTIDE SEQUENCE [LARGE SCALE GENOMIC DNA]</scope>
    <source>
        <strain>ATCC 29342 / M129 / Subtype 1</strain>
    </source>
</reference>
<feature type="chain" id="PRO_0000139335" description="Proline--tRNA ligase">
    <location>
        <begin position="1"/>
        <end position="483"/>
    </location>
</feature>
<comment type="function">
    <text evidence="1">Catalyzes the attachment of proline to tRNA(Pro) in a two-step reaction: proline is first activated by ATP to form Pro-AMP and then transferred to the acceptor end of tRNA(Pro).</text>
</comment>
<comment type="catalytic activity">
    <reaction evidence="1">
        <text>tRNA(Pro) + L-proline + ATP = L-prolyl-tRNA(Pro) + AMP + diphosphate</text>
        <dbReference type="Rhea" id="RHEA:14305"/>
        <dbReference type="Rhea" id="RHEA-COMP:9700"/>
        <dbReference type="Rhea" id="RHEA-COMP:9702"/>
        <dbReference type="ChEBI" id="CHEBI:30616"/>
        <dbReference type="ChEBI" id="CHEBI:33019"/>
        <dbReference type="ChEBI" id="CHEBI:60039"/>
        <dbReference type="ChEBI" id="CHEBI:78442"/>
        <dbReference type="ChEBI" id="CHEBI:78532"/>
        <dbReference type="ChEBI" id="CHEBI:456215"/>
        <dbReference type="EC" id="6.1.1.15"/>
    </reaction>
</comment>
<comment type="subunit">
    <text evidence="1">Homodimer.</text>
</comment>
<comment type="subcellular location">
    <subcellularLocation>
        <location evidence="1">Cytoplasm</location>
    </subcellularLocation>
</comment>
<comment type="domain">
    <text evidence="1">Consists of three domains: the N-terminal catalytic domain, the anticodon-binding domain and the C-terminal extension.</text>
</comment>
<comment type="similarity">
    <text evidence="1">Belongs to the class-II aminoacyl-tRNA synthetase family. ProS type 3 subfamily.</text>
</comment>
<keyword id="KW-0030">Aminoacyl-tRNA synthetase</keyword>
<keyword id="KW-0067">ATP-binding</keyword>
<keyword id="KW-0963">Cytoplasm</keyword>
<keyword id="KW-0436">Ligase</keyword>
<keyword id="KW-0547">Nucleotide-binding</keyword>
<keyword id="KW-0648">Protein biosynthesis</keyword>
<keyword id="KW-1185">Reference proteome</keyword>
<gene>
    <name evidence="1" type="primary">proS</name>
    <name type="ordered locus">MPN_402</name>
    <name type="ORF">MP436</name>
</gene>
<organism>
    <name type="scientific">Mycoplasma pneumoniae (strain ATCC 29342 / M129 / Subtype 1)</name>
    <name type="common">Mycoplasmoides pneumoniae</name>
    <dbReference type="NCBI Taxonomy" id="272634"/>
    <lineage>
        <taxon>Bacteria</taxon>
        <taxon>Bacillati</taxon>
        <taxon>Mycoplasmatota</taxon>
        <taxon>Mycoplasmoidales</taxon>
        <taxon>Mycoplasmoidaceae</taxon>
        <taxon>Mycoplasmoides</taxon>
    </lineage>
</organism>
<protein>
    <recommendedName>
        <fullName evidence="1">Proline--tRNA ligase</fullName>
        <ecNumber evidence="1">6.1.1.15</ecNumber>
    </recommendedName>
    <alternativeName>
        <fullName evidence="1">Prolyl-tRNA synthetase</fullName>
        <shortName evidence="1">ProRS</shortName>
    </alternativeName>
</protein>
<name>SYP_MYCPN</name>
<proteinExistence type="inferred from homology"/>
<dbReference type="EC" id="6.1.1.15" evidence="1"/>
<dbReference type="EMBL" id="U00089">
    <property type="protein sequence ID" value="AAB96084.1"/>
    <property type="molecule type" value="Genomic_DNA"/>
</dbReference>
<dbReference type="PIR" id="S73762">
    <property type="entry name" value="S73762"/>
</dbReference>
<dbReference type="RefSeq" id="NP_110090.1">
    <property type="nucleotide sequence ID" value="NC_000912.1"/>
</dbReference>
<dbReference type="RefSeq" id="WP_010874758.1">
    <property type="nucleotide sequence ID" value="NZ_OU342337.1"/>
</dbReference>
<dbReference type="SMR" id="P75382"/>
<dbReference type="IntAct" id="P75382">
    <property type="interactions" value="1"/>
</dbReference>
<dbReference type="STRING" id="272634.MPN_402"/>
<dbReference type="EnsemblBacteria" id="AAB96084">
    <property type="protein sequence ID" value="AAB96084"/>
    <property type="gene ID" value="MPN_402"/>
</dbReference>
<dbReference type="KEGG" id="mpn:MPN_402"/>
<dbReference type="PATRIC" id="fig|272634.6.peg.435"/>
<dbReference type="HOGENOM" id="CLU_001882_4_2_14"/>
<dbReference type="OrthoDB" id="9809052at2"/>
<dbReference type="BioCyc" id="MPNE272634:G1GJ3-645-MONOMER"/>
<dbReference type="Proteomes" id="UP000000808">
    <property type="component" value="Chromosome"/>
</dbReference>
<dbReference type="GO" id="GO:0017101">
    <property type="term" value="C:aminoacyl-tRNA synthetase multienzyme complex"/>
    <property type="evidence" value="ECO:0007669"/>
    <property type="project" value="TreeGrafter"/>
</dbReference>
<dbReference type="GO" id="GO:0005737">
    <property type="term" value="C:cytoplasm"/>
    <property type="evidence" value="ECO:0007669"/>
    <property type="project" value="UniProtKB-SubCell"/>
</dbReference>
<dbReference type="GO" id="GO:0005524">
    <property type="term" value="F:ATP binding"/>
    <property type="evidence" value="ECO:0007669"/>
    <property type="project" value="UniProtKB-UniRule"/>
</dbReference>
<dbReference type="GO" id="GO:0004827">
    <property type="term" value="F:proline-tRNA ligase activity"/>
    <property type="evidence" value="ECO:0007669"/>
    <property type="project" value="UniProtKB-UniRule"/>
</dbReference>
<dbReference type="GO" id="GO:0006433">
    <property type="term" value="P:prolyl-tRNA aminoacylation"/>
    <property type="evidence" value="ECO:0007669"/>
    <property type="project" value="UniProtKB-UniRule"/>
</dbReference>
<dbReference type="Gene3D" id="3.40.50.800">
    <property type="entry name" value="Anticodon-binding domain"/>
    <property type="match status" value="1"/>
</dbReference>
<dbReference type="Gene3D" id="3.30.930.10">
    <property type="entry name" value="Bira Bifunctional Protein, Domain 2"/>
    <property type="match status" value="1"/>
</dbReference>
<dbReference type="Gene3D" id="3.30.110.30">
    <property type="entry name" value="C-terminal domain of ProRS"/>
    <property type="match status" value="1"/>
</dbReference>
<dbReference type="HAMAP" id="MF_01571">
    <property type="entry name" value="Pro_tRNA_synth_type3"/>
    <property type="match status" value="1"/>
</dbReference>
<dbReference type="InterPro" id="IPR002314">
    <property type="entry name" value="aa-tRNA-synt_IIb"/>
</dbReference>
<dbReference type="InterPro" id="IPR006195">
    <property type="entry name" value="aa-tRNA-synth_II"/>
</dbReference>
<dbReference type="InterPro" id="IPR045864">
    <property type="entry name" value="aa-tRNA-synth_II/BPL/LPL"/>
</dbReference>
<dbReference type="InterPro" id="IPR004154">
    <property type="entry name" value="Anticodon-bd"/>
</dbReference>
<dbReference type="InterPro" id="IPR036621">
    <property type="entry name" value="Anticodon-bd_dom_sf"/>
</dbReference>
<dbReference type="InterPro" id="IPR002316">
    <property type="entry name" value="Pro-tRNA-ligase_IIa"/>
</dbReference>
<dbReference type="InterPro" id="IPR004499">
    <property type="entry name" value="Pro-tRNA-ligase_IIa_arc-type"/>
</dbReference>
<dbReference type="InterPro" id="IPR016061">
    <property type="entry name" value="Pro-tRNA_ligase_II_C"/>
</dbReference>
<dbReference type="InterPro" id="IPR017449">
    <property type="entry name" value="Pro-tRNA_synth_II"/>
</dbReference>
<dbReference type="NCBIfam" id="TIGR00408">
    <property type="entry name" value="proS_fam_I"/>
    <property type="match status" value="1"/>
</dbReference>
<dbReference type="PANTHER" id="PTHR43382:SF2">
    <property type="entry name" value="BIFUNCTIONAL GLUTAMATE_PROLINE--TRNA LIGASE"/>
    <property type="match status" value="1"/>
</dbReference>
<dbReference type="PANTHER" id="PTHR43382">
    <property type="entry name" value="PROLYL-TRNA SYNTHETASE"/>
    <property type="match status" value="1"/>
</dbReference>
<dbReference type="Pfam" id="PF03129">
    <property type="entry name" value="HGTP_anticodon"/>
    <property type="match status" value="1"/>
</dbReference>
<dbReference type="Pfam" id="PF09180">
    <property type="entry name" value="ProRS-C_1"/>
    <property type="match status" value="1"/>
</dbReference>
<dbReference type="Pfam" id="PF00587">
    <property type="entry name" value="tRNA-synt_2b"/>
    <property type="match status" value="1"/>
</dbReference>
<dbReference type="PRINTS" id="PR01046">
    <property type="entry name" value="TRNASYNTHPRO"/>
</dbReference>
<dbReference type="SMART" id="SM00946">
    <property type="entry name" value="ProRS-C_1"/>
    <property type="match status" value="1"/>
</dbReference>
<dbReference type="SUPFAM" id="SSF64586">
    <property type="entry name" value="C-terminal domain of ProRS"/>
    <property type="match status" value="1"/>
</dbReference>
<dbReference type="SUPFAM" id="SSF52954">
    <property type="entry name" value="Class II aaRS ABD-related"/>
    <property type="match status" value="1"/>
</dbReference>
<dbReference type="SUPFAM" id="SSF55681">
    <property type="entry name" value="Class II aaRS and biotin synthetases"/>
    <property type="match status" value="1"/>
</dbReference>
<dbReference type="PROSITE" id="PS50862">
    <property type="entry name" value="AA_TRNA_LIGASE_II"/>
    <property type="match status" value="1"/>
</dbReference>
<evidence type="ECO:0000255" key="1">
    <source>
        <dbReference type="HAMAP-Rule" id="MF_01571"/>
    </source>
</evidence>
<sequence>MANKDQNLTLWYDQLLSKAQLVSYGDVKGTNCFLPNSWNLWLQIQRLYNNATALIKLKDKVILKQFIPIEPLPYTVEQVQLPTLSFYSEYQKEKRHVEGFNPELFLIEQIGTKKLHDPLVLRPTSEIAFCNLWKKQSFSYQNLPVIYNQWTCVFRAEKNTRPFLRNSEFYWQETHGLFSDGVNSESAAIAFWKLYQDIIVNQLCIPAFVGLKSPNERFAGAQNTWTVESIMPDGQALQCATSHDLGQTFTKPFGLTFQNQANQQAIPYSFSCGISTRILGALLLTHSDDFGLVLPWKVAPIQVKLYLFDKKGDTKTVELAQKVQTLLEQLAIRFQFIKVENQLGKQLGQGEVNGIPFQLIVDNPQTVNIFNRLTRVKTAYSFEQLASRFVELVQQYHQAMYDKAKAVVQQKVVQATTLKQIEQAFNDKKAVLCAVRLTDTLEQQLKERYQVTVRCCLEQLQKPQICPFSGESAQDYVLIARAY</sequence>
<accession>P75382</accession>